<name>NCF4_MOUSE</name>
<reference key="1">
    <citation type="journal article" date="1997" name="Immunogenetics">
        <title>Cloning and chromosomal localization of ncf4, the mouse homologue of p40-phox.</title>
        <authorList>
            <person name="Zhan S."/>
            <person name="Kozak C.A."/>
            <person name="Zhan S."/>
            <person name="Chanock S.J."/>
        </authorList>
    </citation>
    <scope>NUCLEOTIDE SEQUENCE [MRNA]</scope>
</reference>
<reference key="2">
    <citation type="journal article" date="1998" name="Eur. J. Biochem.">
        <title>Functional modules and expression of mouse p40(phox) and p67(phox), SH3-domain-containing proteins involved in the phagocyte NADPH oxidase complex.</title>
        <authorList>
            <person name="Mizuki K."/>
            <person name="Kadomatsu K."/>
            <person name="Hata K."/>
            <person name="Ito T."/>
            <person name="Fan Q.-W."/>
            <person name="Kage Y."/>
            <person name="Fukumaki Y."/>
            <person name="Sakaki Y."/>
            <person name="Takeshige K."/>
            <person name="Sumimoto H."/>
        </authorList>
    </citation>
    <scope>NUCLEOTIDE SEQUENCE [MRNA]</scope>
    <source>
        <tissue>Leukemia</tissue>
    </source>
</reference>
<reference key="3">
    <citation type="journal article" date="2005" name="Science">
        <title>The transcriptional landscape of the mammalian genome.</title>
        <authorList>
            <person name="Carninci P."/>
            <person name="Kasukawa T."/>
            <person name="Katayama S."/>
            <person name="Gough J."/>
            <person name="Frith M.C."/>
            <person name="Maeda N."/>
            <person name="Oyama R."/>
            <person name="Ravasi T."/>
            <person name="Lenhard B."/>
            <person name="Wells C."/>
            <person name="Kodzius R."/>
            <person name="Shimokawa K."/>
            <person name="Bajic V.B."/>
            <person name="Brenner S.E."/>
            <person name="Batalov S."/>
            <person name="Forrest A.R."/>
            <person name="Zavolan M."/>
            <person name="Davis M.J."/>
            <person name="Wilming L.G."/>
            <person name="Aidinis V."/>
            <person name="Allen J.E."/>
            <person name="Ambesi-Impiombato A."/>
            <person name="Apweiler R."/>
            <person name="Aturaliya R.N."/>
            <person name="Bailey T.L."/>
            <person name="Bansal M."/>
            <person name="Baxter L."/>
            <person name="Beisel K.W."/>
            <person name="Bersano T."/>
            <person name="Bono H."/>
            <person name="Chalk A.M."/>
            <person name="Chiu K.P."/>
            <person name="Choudhary V."/>
            <person name="Christoffels A."/>
            <person name="Clutterbuck D.R."/>
            <person name="Crowe M.L."/>
            <person name="Dalla E."/>
            <person name="Dalrymple B.P."/>
            <person name="de Bono B."/>
            <person name="Della Gatta G."/>
            <person name="di Bernardo D."/>
            <person name="Down T."/>
            <person name="Engstrom P."/>
            <person name="Fagiolini M."/>
            <person name="Faulkner G."/>
            <person name="Fletcher C.F."/>
            <person name="Fukushima T."/>
            <person name="Furuno M."/>
            <person name="Futaki S."/>
            <person name="Gariboldi M."/>
            <person name="Georgii-Hemming P."/>
            <person name="Gingeras T.R."/>
            <person name="Gojobori T."/>
            <person name="Green R.E."/>
            <person name="Gustincich S."/>
            <person name="Harbers M."/>
            <person name="Hayashi Y."/>
            <person name="Hensch T.K."/>
            <person name="Hirokawa N."/>
            <person name="Hill D."/>
            <person name="Huminiecki L."/>
            <person name="Iacono M."/>
            <person name="Ikeo K."/>
            <person name="Iwama A."/>
            <person name="Ishikawa T."/>
            <person name="Jakt M."/>
            <person name="Kanapin A."/>
            <person name="Katoh M."/>
            <person name="Kawasawa Y."/>
            <person name="Kelso J."/>
            <person name="Kitamura H."/>
            <person name="Kitano H."/>
            <person name="Kollias G."/>
            <person name="Krishnan S.P."/>
            <person name="Kruger A."/>
            <person name="Kummerfeld S.K."/>
            <person name="Kurochkin I.V."/>
            <person name="Lareau L.F."/>
            <person name="Lazarevic D."/>
            <person name="Lipovich L."/>
            <person name="Liu J."/>
            <person name="Liuni S."/>
            <person name="McWilliam S."/>
            <person name="Madan Babu M."/>
            <person name="Madera M."/>
            <person name="Marchionni L."/>
            <person name="Matsuda H."/>
            <person name="Matsuzawa S."/>
            <person name="Miki H."/>
            <person name="Mignone F."/>
            <person name="Miyake S."/>
            <person name="Morris K."/>
            <person name="Mottagui-Tabar S."/>
            <person name="Mulder N."/>
            <person name="Nakano N."/>
            <person name="Nakauchi H."/>
            <person name="Ng P."/>
            <person name="Nilsson R."/>
            <person name="Nishiguchi S."/>
            <person name="Nishikawa S."/>
            <person name="Nori F."/>
            <person name="Ohara O."/>
            <person name="Okazaki Y."/>
            <person name="Orlando V."/>
            <person name="Pang K.C."/>
            <person name="Pavan W.J."/>
            <person name="Pavesi G."/>
            <person name="Pesole G."/>
            <person name="Petrovsky N."/>
            <person name="Piazza S."/>
            <person name="Reed J."/>
            <person name="Reid J.F."/>
            <person name="Ring B.Z."/>
            <person name="Ringwald M."/>
            <person name="Rost B."/>
            <person name="Ruan Y."/>
            <person name="Salzberg S.L."/>
            <person name="Sandelin A."/>
            <person name="Schneider C."/>
            <person name="Schoenbach C."/>
            <person name="Sekiguchi K."/>
            <person name="Semple C.A."/>
            <person name="Seno S."/>
            <person name="Sessa L."/>
            <person name="Sheng Y."/>
            <person name="Shibata Y."/>
            <person name="Shimada H."/>
            <person name="Shimada K."/>
            <person name="Silva D."/>
            <person name="Sinclair B."/>
            <person name="Sperling S."/>
            <person name="Stupka E."/>
            <person name="Sugiura K."/>
            <person name="Sultana R."/>
            <person name="Takenaka Y."/>
            <person name="Taki K."/>
            <person name="Tammoja K."/>
            <person name="Tan S.L."/>
            <person name="Tang S."/>
            <person name="Taylor M.S."/>
            <person name="Tegner J."/>
            <person name="Teichmann S.A."/>
            <person name="Ueda H.R."/>
            <person name="van Nimwegen E."/>
            <person name="Verardo R."/>
            <person name="Wei C.L."/>
            <person name="Yagi K."/>
            <person name="Yamanishi H."/>
            <person name="Zabarovsky E."/>
            <person name="Zhu S."/>
            <person name="Zimmer A."/>
            <person name="Hide W."/>
            <person name="Bult C."/>
            <person name="Grimmond S.M."/>
            <person name="Teasdale R.D."/>
            <person name="Liu E.T."/>
            <person name="Brusic V."/>
            <person name="Quackenbush J."/>
            <person name="Wahlestedt C."/>
            <person name="Mattick J.S."/>
            <person name="Hume D.A."/>
            <person name="Kai C."/>
            <person name="Sasaki D."/>
            <person name="Tomaru Y."/>
            <person name="Fukuda S."/>
            <person name="Kanamori-Katayama M."/>
            <person name="Suzuki M."/>
            <person name="Aoki J."/>
            <person name="Arakawa T."/>
            <person name="Iida J."/>
            <person name="Imamura K."/>
            <person name="Itoh M."/>
            <person name="Kato T."/>
            <person name="Kawaji H."/>
            <person name="Kawagashira N."/>
            <person name="Kawashima T."/>
            <person name="Kojima M."/>
            <person name="Kondo S."/>
            <person name="Konno H."/>
            <person name="Nakano K."/>
            <person name="Ninomiya N."/>
            <person name="Nishio T."/>
            <person name="Okada M."/>
            <person name="Plessy C."/>
            <person name="Shibata K."/>
            <person name="Shiraki T."/>
            <person name="Suzuki S."/>
            <person name="Tagami M."/>
            <person name="Waki K."/>
            <person name="Watahiki A."/>
            <person name="Okamura-Oho Y."/>
            <person name="Suzuki H."/>
            <person name="Kawai J."/>
            <person name="Hayashizaki Y."/>
        </authorList>
    </citation>
    <scope>NUCLEOTIDE SEQUENCE [LARGE SCALE MRNA]</scope>
    <source>
        <strain>C57BL/6J</strain>
        <tissue>Bone marrow</tissue>
    </source>
</reference>
<reference key="4">
    <citation type="journal article" date="2009" name="PLoS Biol.">
        <title>Lineage-specific biology revealed by a finished genome assembly of the mouse.</title>
        <authorList>
            <person name="Church D.M."/>
            <person name="Goodstadt L."/>
            <person name="Hillier L.W."/>
            <person name="Zody M.C."/>
            <person name="Goldstein S."/>
            <person name="She X."/>
            <person name="Bult C.J."/>
            <person name="Agarwala R."/>
            <person name="Cherry J.L."/>
            <person name="DiCuccio M."/>
            <person name="Hlavina W."/>
            <person name="Kapustin Y."/>
            <person name="Meric P."/>
            <person name="Maglott D."/>
            <person name="Birtle Z."/>
            <person name="Marques A.C."/>
            <person name="Graves T."/>
            <person name="Zhou S."/>
            <person name="Teague B."/>
            <person name="Potamousis K."/>
            <person name="Churas C."/>
            <person name="Place M."/>
            <person name="Herschleb J."/>
            <person name="Runnheim R."/>
            <person name="Forrest D."/>
            <person name="Amos-Landgraf J."/>
            <person name="Schwartz D.C."/>
            <person name="Cheng Z."/>
            <person name="Lindblad-Toh K."/>
            <person name="Eichler E.E."/>
            <person name="Ponting C.P."/>
        </authorList>
    </citation>
    <scope>NUCLEOTIDE SEQUENCE [LARGE SCALE GENOMIC DNA]</scope>
    <source>
        <strain>C57BL/6J</strain>
    </source>
</reference>
<reference key="5">
    <citation type="submission" date="2005-07" db="EMBL/GenBank/DDBJ databases">
        <authorList>
            <person name="Mural R.J."/>
            <person name="Adams M.D."/>
            <person name="Myers E.W."/>
            <person name="Smith H.O."/>
            <person name="Venter J.C."/>
        </authorList>
    </citation>
    <scope>NUCLEOTIDE SEQUENCE [LARGE SCALE GENOMIC DNA]</scope>
</reference>
<reference key="6">
    <citation type="journal article" date="2004" name="Genome Res.">
        <title>The status, quality, and expansion of the NIH full-length cDNA project: the Mammalian Gene Collection (MGC).</title>
        <authorList>
            <consortium name="The MGC Project Team"/>
        </authorList>
    </citation>
    <scope>NUCLEOTIDE SEQUENCE [LARGE SCALE MRNA]</scope>
    <source>
        <strain>FVB/N</strain>
        <tissue>Mammary gland</tissue>
    </source>
</reference>
<reference key="7">
    <citation type="journal article" date="2010" name="Cell">
        <title>A tissue-specific atlas of mouse protein phosphorylation and expression.</title>
        <authorList>
            <person name="Huttlin E.L."/>
            <person name="Jedrychowski M.P."/>
            <person name="Elias J.E."/>
            <person name="Goswami T."/>
            <person name="Rad R."/>
            <person name="Beausoleil S.A."/>
            <person name="Villen J."/>
            <person name="Haas W."/>
            <person name="Sowa M.E."/>
            <person name="Gygi S.P."/>
        </authorList>
    </citation>
    <scope>IDENTIFICATION BY MASS SPECTROMETRY [LARGE SCALE ANALYSIS]</scope>
    <source>
        <tissue>Lung</tissue>
        <tissue>Spleen</tissue>
    </source>
</reference>
<reference key="8">
    <citation type="journal article" date="2011" name="Science">
        <title>A family of IFN-gamma-inducible 65-kD GTPases protects against bacterial infection.</title>
        <authorList>
            <person name="Kim B.H."/>
            <person name="Shenoy A.R."/>
            <person name="Kumar P."/>
            <person name="Das R."/>
            <person name="Tiwari S."/>
            <person name="MacMicking J.D."/>
        </authorList>
    </citation>
    <scope>INTERACTION WITH NCF2 AND GBP7</scope>
</reference>
<accession>P97369</accession>
<accession>Q3TBC6</accession>
<keyword id="KW-0963">Cytoplasm</keyword>
<keyword id="KW-0967">Endosome</keyword>
<keyword id="KW-0446">Lipid-binding</keyword>
<keyword id="KW-0472">Membrane</keyword>
<keyword id="KW-0597">Phosphoprotein</keyword>
<keyword id="KW-1185">Reference proteome</keyword>
<keyword id="KW-0728">SH3 domain</keyword>
<gene>
    <name evidence="10" type="primary">Ncf4</name>
</gene>
<sequence length="339" mass="38707">MALAQQLRSESDFEQLPDDVAVSANIADIEEKRGFTSHFVFVIEVKTKGGSKYLIYRRYRQFYALQSKLEERFGPESKNSPFTCSLPTLPAKVYMGAKQEIAETRIPALNAYMKNLLSLPVCVLMDPDVRIFFYQSAYDAEQVPQALRRLRPRTRKIKGVSPQGAIMDRMEAPRAEALFDFTGNSKLELSFKAGDVIFLLSKINKDWLEGTSQGATGIFPGSFVKILKDFPEDEDTTNWLRCYFYEDTGKTIKDIAVEEDLSSTPLFKDLLALMRREFQREDIALSYQDAEGDLVRLLSDEDVGLMVKQARGLPSQKRLFPWKLHVTQKDNYSVYNTVP</sequence>
<feature type="chain" id="PRO_0000096765" description="Neutrophil cytosol factor 4">
    <location>
        <begin position="1"/>
        <end position="339"/>
    </location>
</feature>
<feature type="domain" description="PX" evidence="5">
    <location>
        <begin position="19"/>
        <end position="140"/>
    </location>
</feature>
<feature type="domain" description="SH3" evidence="6">
    <location>
        <begin position="170"/>
        <end position="229"/>
    </location>
</feature>
<feature type="domain" description="PB1" evidence="7">
    <location>
        <begin position="237"/>
        <end position="329"/>
    </location>
</feature>
<feature type="binding site" evidence="1">
    <location>
        <begin position="58"/>
        <end position="60"/>
    </location>
    <ligand>
        <name>a 1,2-diacyl-sn-glycero-3-phospho-(1D-myo-inositol-3-phosphate)</name>
        <dbReference type="ChEBI" id="CHEBI:58088"/>
    </ligand>
</feature>
<feature type="binding site" evidence="1">
    <location>
        <begin position="92"/>
        <end position="94"/>
    </location>
    <ligand>
        <name>a 1,2-diacyl-sn-glycero-3-phospho-(1D-myo-inositol-3-phosphate)</name>
        <dbReference type="ChEBI" id="CHEBI:58088"/>
    </ligand>
</feature>
<feature type="modified residue" description="Phosphothreonine" evidence="4">
    <location>
        <position position="154"/>
    </location>
</feature>
<feature type="modified residue" description="Phosphoserine" evidence="4">
    <location>
        <position position="315"/>
    </location>
</feature>
<feature type="sequence conflict" description="In Ref. 1; AAC53122, 2; BAA25651 and 6; AAH25517." evidence="9" ref="1 2 6">
    <original>S</original>
    <variation>N</variation>
    <location>
        <position position="85"/>
    </location>
</feature>
<evidence type="ECO:0000250" key="1"/>
<evidence type="ECO:0000250" key="2">
    <source>
        <dbReference type="UniProtKB" id="P04839"/>
    </source>
</evidence>
<evidence type="ECO:0000250" key="3">
    <source>
        <dbReference type="UniProtKB" id="P14598"/>
    </source>
</evidence>
<evidence type="ECO:0000250" key="4">
    <source>
        <dbReference type="UniProtKB" id="Q15080"/>
    </source>
</evidence>
<evidence type="ECO:0000255" key="5">
    <source>
        <dbReference type="PROSITE-ProRule" id="PRU00147"/>
    </source>
</evidence>
<evidence type="ECO:0000255" key="6">
    <source>
        <dbReference type="PROSITE-ProRule" id="PRU00192"/>
    </source>
</evidence>
<evidence type="ECO:0000255" key="7">
    <source>
        <dbReference type="PROSITE-ProRule" id="PRU01081"/>
    </source>
</evidence>
<evidence type="ECO:0000269" key="8">
    <source>
    </source>
</evidence>
<evidence type="ECO:0000305" key="9"/>
<evidence type="ECO:0000312" key="10">
    <source>
        <dbReference type="MGI" id="MGI:109186"/>
    </source>
</evidence>
<comment type="function">
    <text evidence="2 3 4">Subunit of the phagocyte NADPH oxidase complex that mediates the transfer of electrons from cytosolic NADPH to O2 to produce the superoxide anion (O2(-)) (By similarity). In the activated complex, electrons are first transferred from NADPH to flavin adenine dinucleotide (FAD) and subsequently transferred via two heme molecules to molecular oxygen, producing superoxide through an outer-sphere reaction. Activation of the NADPH oxidase complex is initiated by the assembly of cytosolic subunits of the NADPH oxidase complex with the core NADPH oxidase complex to form a complex at the plasma membrane or phagosomal membrane (By similarity). This activation process is initiated by phosphorylation dependent binding of the cytosolic NCF1/p47-phox subunit to the C-terminus of CYBA/p22-phox (By similarity).</text>
</comment>
<comment type="subunit">
    <text evidence="4 8">Component of the phagocyte NADPH oxidase complex composed of an obligatory core heterodimer formed by the membrane proteins CYBA and CYBB and the cytosolic regulatory subunits NCF1/p47-phox, NCF2/p67-phox, NCF4/p40-phox and the small GTPase RAC1 or RAC2. Part of a cytosolic complex composed at least by NCF1, NCF2 and NCF4 (By similarity). Interacts with NCF2 (PubMed:21551061). Interacts with NCF1 (By similarity). The NCF2-NCF4 complex interacts with GBP7 (via GB1/RHD3-type G domain) (PubMed:21551061).</text>
</comment>
<comment type="subcellular location">
    <subcellularLocation>
        <location evidence="4">Cytoplasm</location>
        <location evidence="4">Cytosol</location>
    </subcellularLocation>
    <subcellularLocation>
        <location evidence="4">Endosome membrane</location>
        <topology evidence="4">Peripheral membrane protein</topology>
        <orientation evidence="4">Cytoplasmic side</orientation>
    </subcellularLocation>
    <subcellularLocation>
        <location evidence="4">Membrane</location>
        <topology evidence="4">Peripheral membrane protein</topology>
    </subcellularLocation>
    <text evidence="4">Translocates to the membrane upon activation by phorbol myristate acetate (PMA).</text>
</comment>
<comment type="domain">
    <text evidence="4">The PB1 domain mediates the association with NCF2/p67-PHOX.</text>
</comment>
<comment type="domain">
    <text evidence="4">The PX domain mediates interaction with membranes enriched in phosphatidylnositol 3-phosphate.</text>
</comment>
<dbReference type="EMBL" id="U59488">
    <property type="protein sequence ID" value="AAC53122.1"/>
    <property type="molecule type" value="mRNA"/>
</dbReference>
<dbReference type="EMBL" id="AB002665">
    <property type="protein sequence ID" value="BAA25651.1"/>
    <property type="molecule type" value="mRNA"/>
</dbReference>
<dbReference type="EMBL" id="AK150510">
    <property type="protein sequence ID" value="BAE29623.1"/>
    <property type="molecule type" value="mRNA"/>
</dbReference>
<dbReference type="EMBL" id="AK171315">
    <property type="protein sequence ID" value="BAE42387.1"/>
    <property type="molecule type" value="mRNA"/>
</dbReference>
<dbReference type="EMBL" id="AL589692">
    <property type="status" value="NOT_ANNOTATED_CDS"/>
    <property type="molecule type" value="Genomic_DNA"/>
</dbReference>
<dbReference type="EMBL" id="CH466545">
    <property type="protein sequence ID" value="EDL29666.1"/>
    <property type="molecule type" value="Genomic_DNA"/>
</dbReference>
<dbReference type="EMBL" id="BC025517">
    <property type="protein sequence ID" value="AAH25517.1"/>
    <property type="molecule type" value="mRNA"/>
</dbReference>
<dbReference type="CCDS" id="CCDS27610.1"/>
<dbReference type="RefSeq" id="NP_001398351.1">
    <property type="nucleotide sequence ID" value="NM_001411422.1"/>
</dbReference>
<dbReference type="RefSeq" id="NP_001398352.1">
    <property type="nucleotide sequence ID" value="NM_001411423.1"/>
</dbReference>
<dbReference type="RefSeq" id="NP_032703.2">
    <property type="nucleotide sequence ID" value="NM_008677.3"/>
</dbReference>
<dbReference type="RefSeq" id="XP_006520627.1">
    <property type="nucleotide sequence ID" value="XM_006520564.1"/>
</dbReference>
<dbReference type="RefSeq" id="XP_006520628.1">
    <property type="nucleotide sequence ID" value="XM_006520565.2"/>
</dbReference>
<dbReference type="SMR" id="P97369"/>
<dbReference type="BioGRID" id="201703">
    <property type="interactions" value="11"/>
</dbReference>
<dbReference type="DIP" id="DIP-2664N"/>
<dbReference type="FunCoup" id="P97369">
    <property type="interactions" value="620"/>
</dbReference>
<dbReference type="IntAct" id="P97369">
    <property type="interactions" value="1"/>
</dbReference>
<dbReference type="STRING" id="10090.ENSMUSP00000094084"/>
<dbReference type="iPTMnet" id="P97369"/>
<dbReference type="PhosphoSitePlus" id="P97369"/>
<dbReference type="jPOST" id="P97369"/>
<dbReference type="PaxDb" id="10090-ENSMUSP00000094084"/>
<dbReference type="PeptideAtlas" id="P97369"/>
<dbReference type="ProteomicsDB" id="286158"/>
<dbReference type="Antibodypedia" id="11797">
    <property type="antibodies" value="544 antibodies from 38 providers"/>
</dbReference>
<dbReference type="DNASU" id="17972"/>
<dbReference type="Ensembl" id="ENSMUST00000096357.12">
    <property type="protein sequence ID" value="ENSMUSP00000094084.6"/>
    <property type="gene ID" value="ENSMUSG00000071715.13"/>
</dbReference>
<dbReference type="GeneID" id="17972"/>
<dbReference type="KEGG" id="mmu:17972"/>
<dbReference type="UCSC" id="uc007wow.2">
    <property type="organism name" value="mouse"/>
</dbReference>
<dbReference type="AGR" id="MGI:109186"/>
<dbReference type="CTD" id="4689"/>
<dbReference type="MGI" id="MGI:109186">
    <property type="gene designation" value="Ncf4"/>
</dbReference>
<dbReference type="VEuPathDB" id="HostDB:ENSMUSG00000071715"/>
<dbReference type="eggNOG" id="KOG4773">
    <property type="taxonomic scope" value="Eukaryota"/>
</dbReference>
<dbReference type="GeneTree" id="ENSGT00510000048561"/>
<dbReference type="HOGENOM" id="CLU_068185_0_0_1"/>
<dbReference type="InParanoid" id="P97369"/>
<dbReference type="OMA" id="KLHVTQQ"/>
<dbReference type="OrthoDB" id="10255964at2759"/>
<dbReference type="PhylomeDB" id="P97369"/>
<dbReference type="TreeFam" id="TF330850"/>
<dbReference type="Reactome" id="R-MMU-1222556">
    <property type="pathway name" value="ROS and RNS production in phagocytes"/>
</dbReference>
<dbReference type="Reactome" id="R-MMU-1236973">
    <property type="pathway name" value="Cross-presentation of particulate exogenous antigens (phagosomes)"/>
</dbReference>
<dbReference type="Reactome" id="R-MMU-3299685">
    <property type="pathway name" value="Detoxification of Reactive Oxygen Species"/>
</dbReference>
<dbReference type="Reactome" id="R-MMU-4420097">
    <property type="pathway name" value="VEGFA-VEGFR2 Pathway"/>
</dbReference>
<dbReference type="Reactome" id="R-MMU-5668599">
    <property type="pathway name" value="RHO GTPases Activate NADPH Oxidases"/>
</dbReference>
<dbReference type="Reactome" id="R-MMU-9013149">
    <property type="pathway name" value="RAC1 GTPase cycle"/>
</dbReference>
<dbReference type="Reactome" id="R-MMU-9013404">
    <property type="pathway name" value="RAC2 GTPase cycle"/>
</dbReference>
<dbReference type="Reactome" id="R-MMU-9013423">
    <property type="pathway name" value="RAC3 GTPase cycle"/>
</dbReference>
<dbReference type="BioGRID-ORCS" id="17972">
    <property type="hits" value="4 hits in 77 CRISPR screens"/>
</dbReference>
<dbReference type="PRO" id="PR:P97369"/>
<dbReference type="Proteomes" id="UP000000589">
    <property type="component" value="Chromosome 15"/>
</dbReference>
<dbReference type="RNAct" id="P97369">
    <property type="molecule type" value="protein"/>
</dbReference>
<dbReference type="Bgee" id="ENSMUSG00000071715">
    <property type="expression patterns" value="Expressed in granulocyte and 110 other cell types or tissues"/>
</dbReference>
<dbReference type="ExpressionAtlas" id="P97369">
    <property type="expression patterns" value="baseline and differential"/>
</dbReference>
<dbReference type="GO" id="GO:0005737">
    <property type="term" value="C:cytoplasm"/>
    <property type="evidence" value="ECO:0000314"/>
    <property type="project" value="MGI"/>
</dbReference>
<dbReference type="GO" id="GO:0005829">
    <property type="term" value="C:cytosol"/>
    <property type="evidence" value="ECO:0000250"/>
    <property type="project" value="UniProtKB"/>
</dbReference>
<dbReference type="GO" id="GO:0010008">
    <property type="term" value="C:endosome membrane"/>
    <property type="evidence" value="ECO:0000250"/>
    <property type="project" value="UniProtKB"/>
</dbReference>
<dbReference type="GO" id="GO:0016020">
    <property type="term" value="C:membrane"/>
    <property type="evidence" value="ECO:0000250"/>
    <property type="project" value="UniProtKB"/>
</dbReference>
<dbReference type="GO" id="GO:0043020">
    <property type="term" value="C:NADPH oxidase complex"/>
    <property type="evidence" value="ECO:0007669"/>
    <property type="project" value="Ensembl"/>
</dbReference>
<dbReference type="GO" id="GO:0032266">
    <property type="term" value="F:phosphatidylinositol-3-phosphate binding"/>
    <property type="evidence" value="ECO:0000250"/>
    <property type="project" value="UniProtKB"/>
</dbReference>
<dbReference type="GO" id="GO:0016176">
    <property type="term" value="F:superoxide-generating NADPH oxidase activator activity"/>
    <property type="evidence" value="ECO:0000250"/>
    <property type="project" value="UniProtKB"/>
</dbReference>
<dbReference type="GO" id="GO:0006909">
    <property type="term" value="P:phagocytosis"/>
    <property type="evidence" value="ECO:0007669"/>
    <property type="project" value="InterPro"/>
</dbReference>
<dbReference type="GO" id="GO:0045730">
    <property type="term" value="P:respiratory burst"/>
    <property type="evidence" value="ECO:0007669"/>
    <property type="project" value="InterPro"/>
</dbReference>
<dbReference type="GO" id="GO:0042554">
    <property type="term" value="P:superoxide anion generation"/>
    <property type="evidence" value="ECO:0007669"/>
    <property type="project" value="Ensembl"/>
</dbReference>
<dbReference type="CDD" id="cd06399">
    <property type="entry name" value="PB1_P40"/>
    <property type="match status" value="1"/>
</dbReference>
<dbReference type="CDD" id="cd06882">
    <property type="entry name" value="PX_p40phox"/>
    <property type="match status" value="1"/>
</dbReference>
<dbReference type="CDD" id="cd11869">
    <property type="entry name" value="SH3_p40phox"/>
    <property type="match status" value="1"/>
</dbReference>
<dbReference type="FunFam" id="3.10.20.90:FF:000189">
    <property type="entry name" value="Neutrophil cytosol factor 4"/>
    <property type="match status" value="1"/>
</dbReference>
<dbReference type="FunFam" id="3.30.1520.10:FF:000024">
    <property type="entry name" value="Neutrophil cytosol factor 4"/>
    <property type="match status" value="1"/>
</dbReference>
<dbReference type="FunFam" id="2.30.30.40:FF:000149">
    <property type="entry name" value="neutrophil cytosol factor 4"/>
    <property type="match status" value="1"/>
</dbReference>
<dbReference type="Gene3D" id="3.10.20.90">
    <property type="entry name" value="Phosphatidylinositol 3-kinase Catalytic Subunit, Chain A, domain 1"/>
    <property type="match status" value="1"/>
</dbReference>
<dbReference type="Gene3D" id="3.30.1520.10">
    <property type="entry name" value="Phox-like domain"/>
    <property type="match status" value="1"/>
</dbReference>
<dbReference type="Gene3D" id="2.30.30.40">
    <property type="entry name" value="SH3 Domains"/>
    <property type="match status" value="1"/>
</dbReference>
<dbReference type="InterPro" id="IPR051228">
    <property type="entry name" value="NADPH_Oxidase/PX-Domain"/>
</dbReference>
<dbReference type="InterPro" id="IPR000919">
    <property type="entry name" value="p40phox"/>
</dbReference>
<dbReference type="InterPro" id="IPR035541">
    <property type="entry name" value="p40phox_SH3"/>
</dbReference>
<dbReference type="InterPro" id="IPR053793">
    <property type="entry name" value="PB1-like"/>
</dbReference>
<dbReference type="InterPro" id="IPR000270">
    <property type="entry name" value="PB1_dom"/>
</dbReference>
<dbReference type="InterPro" id="IPR034853">
    <property type="entry name" value="PB1_P40"/>
</dbReference>
<dbReference type="InterPro" id="IPR001683">
    <property type="entry name" value="PX_dom"/>
</dbReference>
<dbReference type="InterPro" id="IPR036871">
    <property type="entry name" value="PX_dom_sf"/>
</dbReference>
<dbReference type="InterPro" id="IPR034912">
    <property type="entry name" value="PX_p40phox"/>
</dbReference>
<dbReference type="InterPro" id="IPR036028">
    <property type="entry name" value="SH3-like_dom_sf"/>
</dbReference>
<dbReference type="InterPro" id="IPR001452">
    <property type="entry name" value="SH3_domain"/>
</dbReference>
<dbReference type="PANTHER" id="PTHR15706:SF20">
    <property type="entry name" value="NEUTROPHIL CYTOSOL FACTOR 4"/>
    <property type="match status" value="1"/>
</dbReference>
<dbReference type="PANTHER" id="PTHR15706">
    <property type="entry name" value="SH3 MULTIPLE DOMAIN"/>
    <property type="match status" value="1"/>
</dbReference>
<dbReference type="Pfam" id="PF00564">
    <property type="entry name" value="PB1"/>
    <property type="match status" value="1"/>
</dbReference>
<dbReference type="Pfam" id="PF00787">
    <property type="entry name" value="PX"/>
    <property type="match status" value="1"/>
</dbReference>
<dbReference type="Pfam" id="PF00018">
    <property type="entry name" value="SH3_1"/>
    <property type="match status" value="1"/>
</dbReference>
<dbReference type="PRINTS" id="PR00497">
    <property type="entry name" value="P40PHOX"/>
</dbReference>
<dbReference type="PRINTS" id="PR00452">
    <property type="entry name" value="SH3DOMAIN"/>
</dbReference>
<dbReference type="SMART" id="SM00666">
    <property type="entry name" value="PB1"/>
    <property type="match status" value="1"/>
</dbReference>
<dbReference type="SMART" id="SM00312">
    <property type="entry name" value="PX"/>
    <property type="match status" value="1"/>
</dbReference>
<dbReference type="SMART" id="SM00326">
    <property type="entry name" value="SH3"/>
    <property type="match status" value="1"/>
</dbReference>
<dbReference type="SUPFAM" id="SSF54277">
    <property type="entry name" value="CAD &amp; PB1 domains"/>
    <property type="match status" value="1"/>
</dbReference>
<dbReference type="SUPFAM" id="SSF64268">
    <property type="entry name" value="PX domain"/>
    <property type="match status" value="1"/>
</dbReference>
<dbReference type="SUPFAM" id="SSF50044">
    <property type="entry name" value="SH3-domain"/>
    <property type="match status" value="1"/>
</dbReference>
<dbReference type="PROSITE" id="PS51745">
    <property type="entry name" value="PB1"/>
    <property type="match status" value="1"/>
</dbReference>
<dbReference type="PROSITE" id="PS50195">
    <property type="entry name" value="PX"/>
    <property type="match status" value="1"/>
</dbReference>
<dbReference type="PROSITE" id="PS50002">
    <property type="entry name" value="SH3"/>
    <property type="match status" value="1"/>
</dbReference>
<protein>
    <recommendedName>
        <fullName evidence="9">Neutrophil cytosol factor 4</fullName>
        <shortName>NCF-4</shortName>
    </recommendedName>
    <alternativeName>
        <fullName>Neutrophil NADPH oxidase factor 4</fullName>
    </alternativeName>
    <alternativeName>
        <fullName>p40-phox</fullName>
        <shortName>p40phox</shortName>
    </alternativeName>
</protein>
<organism>
    <name type="scientific">Mus musculus</name>
    <name type="common">Mouse</name>
    <dbReference type="NCBI Taxonomy" id="10090"/>
    <lineage>
        <taxon>Eukaryota</taxon>
        <taxon>Metazoa</taxon>
        <taxon>Chordata</taxon>
        <taxon>Craniata</taxon>
        <taxon>Vertebrata</taxon>
        <taxon>Euteleostomi</taxon>
        <taxon>Mammalia</taxon>
        <taxon>Eutheria</taxon>
        <taxon>Euarchontoglires</taxon>
        <taxon>Glires</taxon>
        <taxon>Rodentia</taxon>
        <taxon>Myomorpha</taxon>
        <taxon>Muroidea</taxon>
        <taxon>Muridae</taxon>
        <taxon>Murinae</taxon>
        <taxon>Mus</taxon>
        <taxon>Mus</taxon>
    </lineage>
</organism>
<proteinExistence type="evidence at protein level"/>